<accession>Q3MHA9</accession>
<dbReference type="EMBL" id="CP000117">
    <property type="protein sequence ID" value="ABA19627.1"/>
    <property type="molecule type" value="Genomic_DNA"/>
</dbReference>
<dbReference type="SMR" id="Q3MHA9"/>
<dbReference type="STRING" id="240292.Ava_0001"/>
<dbReference type="KEGG" id="ava:Ava_0001"/>
<dbReference type="eggNOG" id="COG0593">
    <property type="taxonomic scope" value="Bacteria"/>
</dbReference>
<dbReference type="HOGENOM" id="CLU_026910_3_1_3"/>
<dbReference type="Proteomes" id="UP000002533">
    <property type="component" value="Chromosome"/>
</dbReference>
<dbReference type="GO" id="GO:0005737">
    <property type="term" value="C:cytoplasm"/>
    <property type="evidence" value="ECO:0007669"/>
    <property type="project" value="UniProtKB-SubCell"/>
</dbReference>
<dbReference type="GO" id="GO:0005886">
    <property type="term" value="C:plasma membrane"/>
    <property type="evidence" value="ECO:0007669"/>
    <property type="project" value="TreeGrafter"/>
</dbReference>
<dbReference type="GO" id="GO:0005524">
    <property type="term" value="F:ATP binding"/>
    <property type="evidence" value="ECO:0007669"/>
    <property type="project" value="UniProtKB-UniRule"/>
</dbReference>
<dbReference type="GO" id="GO:0016887">
    <property type="term" value="F:ATP hydrolysis activity"/>
    <property type="evidence" value="ECO:0007669"/>
    <property type="project" value="InterPro"/>
</dbReference>
<dbReference type="GO" id="GO:0003688">
    <property type="term" value="F:DNA replication origin binding"/>
    <property type="evidence" value="ECO:0007669"/>
    <property type="project" value="UniProtKB-UniRule"/>
</dbReference>
<dbReference type="GO" id="GO:0008289">
    <property type="term" value="F:lipid binding"/>
    <property type="evidence" value="ECO:0007669"/>
    <property type="project" value="UniProtKB-KW"/>
</dbReference>
<dbReference type="GO" id="GO:0006270">
    <property type="term" value="P:DNA replication initiation"/>
    <property type="evidence" value="ECO:0007669"/>
    <property type="project" value="UniProtKB-UniRule"/>
</dbReference>
<dbReference type="GO" id="GO:0006275">
    <property type="term" value="P:regulation of DNA replication"/>
    <property type="evidence" value="ECO:0007669"/>
    <property type="project" value="UniProtKB-UniRule"/>
</dbReference>
<dbReference type="CDD" id="cd00009">
    <property type="entry name" value="AAA"/>
    <property type="match status" value="1"/>
</dbReference>
<dbReference type="CDD" id="cd06571">
    <property type="entry name" value="Bac_DnaA_C"/>
    <property type="match status" value="1"/>
</dbReference>
<dbReference type="FunFam" id="3.40.50.300:FF:000150">
    <property type="entry name" value="Chromosomal replication initiator protein DnaA"/>
    <property type="match status" value="1"/>
</dbReference>
<dbReference type="Gene3D" id="1.10.1750.10">
    <property type="match status" value="1"/>
</dbReference>
<dbReference type="Gene3D" id="1.10.8.60">
    <property type="match status" value="1"/>
</dbReference>
<dbReference type="Gene3D" id="3.30.300.180">
    <property type="match status" value="1"/>
</dbReference>
<dbReference type="Gene3D" id="3.40.50.300">
    <property type="entry name" value="P-loop containing nucleotide triphosphate hydrolases"/>
    <property type="match status" value="1"/>
</dbReference>
<dbReference type="HAMAP" id="MF_00377">
    <property type="entry name" value="DnaA_bact"/>
    <property type="match status" value="1"/>
</dbReference>
<dbReference type="InterPro" id="IPR003593">
    <property type="entry name" value="AAA+_ATPase"/>
</dbReference>
<dbReference type="InterPro" id="IPR001957">
    <property type="entry name" value="Chromosome_initiator_DnaA"/>
</dbReference>
<dbReference type="InterPro" id="IPR020591">
    <property type="entry name" value="Chromosome_initiator_DnaA-like"/>
</dbReference>
<dbReference type="InterPro" id="IPR018312">
    <property type="entry name" value="Chromosome_initiator_DnaA_CS"/>
</dbReference>
<dbReference type="InterPro" id="IPR013159">
    <property type="entry name" value="DnaA_C"/>
</dbReference>
<dbReference type="InterPro" id="IPR013317">
    <property type="entry name" value="DnaA_dom"/>
</dbReference>
<dbReference type="InterPro" id="IPR024633">
    <property type="entry name" value="DnaA_N_dom"/>
</dbReference>
<dbReference type="InterPro" id="IPR038454">
    <property type="entry name" value="DnaA_N_sf"/>
</dbReference>
<dbReference type="InterPro" id="IPR027417">
    <property type="entry name" value="P-loop_NTPase"/>
</dbReference>
<dbReference type="InterPro" id="IPR010921">
    <property type="entry name" value="Trp_repressor/repl_initiator"/>
</dbReference>
<dbReference type="NCBIfam" id="TIGR00362">
    <property type="entry name" value="DnaA"/>
    <property type="match status" value="1"/>
</dbReference>
<dbReference type="PANTHER" id="PTHR30050">
    <property type="entry name" value="CHROMOSOMAL REPLICATION INITIATOR PROTEIN DNAA"/>
    <property type="match status" value="1"/>
</dbReference>
<dbReference type="PANTHER" id="PTHR30050:SF2">
    <property type="entry name" value="CHROMOSOMAL REPLICATION INITIATOR PROTEIN DNAA"/>
    <property type="match status" value="1"/>
</dbReference>
<dbReference type="Pfam" id="PF00308">
    <property type="entry name" value="Bac_DnaA"/>
    <property type="match status" value="1"/>
</dbReference>
<dbReference type="Pfam" id="PF08299">
    <property type="entry name" value="Bac_DnaA_C"/>
    <property type="match status" value="1"/>
</dbReference>
<dbReference type="Pfam" id="PF11638">
    <property type="entry name" value="DnaA_N"/>
    <property type="match status" value="1"/>
</dbReference>
<dbReference type="PRINTS" id="PR00051">
    <property type="entry name" value="DNAA"/>
</dbReference>
<dbReference type="SMART" id="SM00382">
    <property type="entry name" value="AAA"/>
    <property type="match status" value="1"/>
</dbReference>
<dbReference type="SMART" id="SM00760">
    <property type="entry name" value="Bac_DnaA_C"/>
    <property type="match status" value="1"/>
</dbReference>
<dbReference type="SUPFAM" id="SSF52540">
    <property type="entry name" value="P-loop containing nucleoside triphosphate hydrolases"/>
    <property type="match status" value="1"/>
</dbReference>
<dbReference type="SUPFAM" id="SSF48295">
    <property type="entry name" value="TrpR-like"/>
    <property type="match status" value="1"/>
</dbReference>
<dbReference type="PROSITE" id="PS01008">
    <property type="entry name" value="DNAA"/>
    <property type="match status" value="1"/>
</dbReference>
<name>DNAA_TRIV2</name>
<comment type="function">
    <text evidence="1">Plays an essential role in the initiation and regulation of chromosomal replication. ATP-DnaA binds to the origin of replication (oriC) to initiate formation of the DNA replication initiation complex once per cell cycle. Binds the DnaA box (a 9 base pair repeat at the origin) and separates the double-stranded (ds)DNA. Forms a right-handed helical filament on oriC DNA; dsDNA binds to the exterior of the filament while single-stranded (ss)DNA is stabiized in the filament's interior. The ATP-DnaA-oriC complex binds and stabilizes one strand of the AT-rich DNA unwinding element (DUE), permitting loading of DNA polymerase. After initiation quickly degrades to an ADP-DnaA complex that is not apt for DNA replication. Binds acidic phospholipids.</text>
</comment>
<comment type="subunit">
    <text evidence="1">Oligomerizes as a right-handed, spiral filament on DNA at oriC.</text>
</comment>
<comment type="subcellular location">
    <subcellularLocation>
        <location evidence="1">Cytoplasm</location>
    </subcellularLocation>
</comment>
<comment type="domain">
    <text evidence="1">Domain I is involved in oligomerization and binding regulators, domain II is flexibile and of varying length in different bacteria, domain III forms the AAA+ region, while domain IV binds dsDNA.</text>
</comment>
<comment type="similarity">
    <text evidence="1">Belongs to the DnaA family.</text>
</comment>
<organism>
    <name type="scientific">Trichormus variabilis (strain ATCC 29413 / PCC 7937)</name>
    <name type="common">Anabaena variabilis</name>
    <dbReference type="NCBI Taxonomy" id="240292"/>
    <lineage>
        <taxon>Bacteria</taxon>
        <taxon>Bacillati</taxon>
        <taxon>Cyanobacteriota</taxon>
        <taxon>Cyanophyceae</taxon>
        <taxon>Nostocales</taxon>
        <taxon>Nostocaceae</taxon>
        <taxon>Trichormus</taxon>
    </lineage>
</organism>
<sequence>MEISIDSLWSQVLERLQIELSRPTFETWIKTANAERLENNCLVIITPNPFARNWLQKYYITTIANVVQSILGHPVEIYITVAKGEEFEEIGGGGAWELPTTNSIYETPNQNRQPNTELNAKYVFSRFVVGANNRMAHAASLAVAESPGREFNPLFLCGGVGLGKTHLMQAIGHYRWEICPDSKIFYVSTEQFTNDLITAIRNDSMQSFREHYRAADVLLVDDIQFIEGKEYTQEEFFHTFNTLHEAGKQVVIASDRPPNQIPSLQERLCSRFSMGLIADIQAPDLETRMAILQKKSEYEKIRLPRDVIEYIATNFTSNIRELEGALTRALAYISIWGLPMTVANLAPVLVTPTEKIAATPEAILTVIADNFDISVEDLKSNSRRREISWARQIGMYLMRQHTDLSFPRIGEEFGGKDHTTVLYSCDKIAQLVESDRGLSQTLRQLSDRIKMNSRSRKPSL</sequence>
<feature type="chain" id="PRO_1000048603" description="Chromosomal replication initiator protein DnaA">
    <location>
        <begin position="1"/>
        <end position="460"/>
    </location>
</feature>
<feature type="region of interest" description="Domain I, interacts with DnaA modulators" evidence="1">
    <location>
        <begin position="1"/>
        <end position="73"/>
    </location>
</feature>
<feature type="region of interest" description="Domain II" evidence="1">
    <location>
        <begin position="73"/>
        <end position="116"/>
    </location>
</feature>
<feature type="region of interest" description="Domain III, AAA+ region" evidence="1">
    <location>
        <begin position="117"/>
        <end position="333"/>
    </location>
</feature>
<feature type="region of interest" description="Domain IV, binds dsDNA" evidence="1">
    <location>
        <begin position="334"/>
        <end position="460"/>
    </location>
</feature>
<feature type="binding site" evidence="1">
    <location>
        <position position="161"/>
    </location>
    <ligand>
        <name>ATP</name>
        <dbReference type="ChEBI" id="CHEBI:30616"/>
    </ligand>
</feature>
<feature type="binding site" evidence="1">
    <location>
        <position position="163"/>
    </location>
    <ligand>
        <name>ATP</name>
        <dbReference type="ChEBI" id="CHEBI:30616"/>
    </ligand>
</feature>
<feature type="binding site" evidence="1">
    <location>
        <position position="164"/>
    </location>
    <ligand>
        <name>ATP</name>
        <dbReference type="ChEBI" id="CHEBI:30616"/>
    </ligand>
</feature>
<feature type="binding site" evidence="1">
    <location>
        <position position="165"/>
    </location>
    <ligand>
        <name>ATP</name>
        <dbReference type="ChEBI" id="CHEBI:30616"/>
    </ligand>
</feature>
<keyword id="KW-0067">ATP-binding</keyword>
<keyword id="KW-0963">Cytoplasm</keyword>
<keyword id="KW-0235">DNA replication</keyword>
<keyword id="KW-0238">DNA-binding</keyword>
<keyword id="KW-0446">Lipid-binding</keyword>
<keyword id="KW-0547">Nucleotide-binding</keyword>
<evidence type="ECO:0000255" key="1">
    <source>
        <dbReference type="HAMAP-Rule" id="MF_00377"/>
    </source>
</evidence>
<proteinExistence type="inferred from homology"/>
<gene>
    <name evidence="1" type="primary">dnaA</name>
    <name type="ordered locus">Ava_0001</name>
</gene>
<protein>
    <recommendedName>
        <fullName evidence="1">Chromosomal replication initiator protein DnaA</fullName>
    </recommendedName>
</protein>
<reference key="1">
    <citation type="journal article" date="2014" name="Stand. Genomic Sci.">
        <title>Complete genome sequence of Anabaena variabilis ATCC 29413.</title>
        <authorList>
            <person name="Thiel T."/>
            <person name="Pratte B.S."/>
            <person name="Zhong J."/>
            <person name="Goodwin L."/>
            <person name="Copeland A."/>
            <person name="Lucas S."/>
            <person name="Han C."/>
            <person name="Pitluck S."/>
            <person name="Land M.L."/>
            <person name="Kyrpides N.C."/>
            <person name="Woyke T."/>
        </authorList>
    </citation>
    <scope>NUCLEOTIDE SEQUENCE [LARGE SCALE GENOMIC DNA]</scope>
    <source>
        <strain>ATCC 29413 / PCC 7937</strain>
    </source>
</reference>